<feature type="chain" id="PRO_5000256927" description="Putative antiporter subunit mnhA2">
    <location>
        <begin position="1"/>
        <end position="800"/>
    </location>
</feature>
<feature type="transmembrane region" description="Helical" evidence="2">
    <location>
        <begin position="1"/>
        <end position="21"/>
    </location>
</feature>
<feature type="transmembrane region" description="Helical" evidence="2">
    <location>
        <begin position="33"/>
        <end position="53"/>
    </location>
</feature>
<feature type="transmembrane region" description="Helical" evidence="2">
    <location>
        <begin position="78"/>
        <end position="98"/>
    </location>
</feature>
<feature type="transmembrane region" description="Helical" evidence="2">
    <location>
        <begin position="118"/>
        <end position="138"/>
    </location>
</feature>
<feature type="transmembrane region" description="Helical" evidence="2">
    <location>
        <begin position="167"/>
        <end position="187"/>
    </location>
</feature>
<feature type="transmembrane region" description="Helical" evidence="2">
    <location>
        <begin position="207"/>
        <end position="227"/>
    </location>
</feature>
<feature type="transmembrane region" description="Helical" evidence="2">
    <location>
        <begin position="241"/>
        <end position="261"/>
    </location>
</feature>
<feature type="transmembrane region" description="Helical" evidence="2">
    <location>
        <begin position="273"/>
        <end position="293"/>
    </location>
</feature>
<feature type="transmembrane region" description="Helical" evidence="2">
    <location>
        <begin position="300"/>
        <end position="320"/>
    </location>
</feature>
<feature type="transmembrane region" description="Helical" evidence="2">
    <location>
        <begin position="331"/>
        <end position="351"/>
    </location>
</feature>
<feature type="transmembrane region" description="Helical" evidence="2">
    <location>
        <begin position="387"/>
        <end position="407"/>
    </location>
</feature>
<feature type="transmembrane region" description="Helical" evidence="2">
    <location>
        <begin position="424"/>
        <end position="444"/>
    </location>
</feature>
<feature type="transmembrane region" description="Helical" evidence="2">
    <location>
        <begin position="472"/>
        <end position="492"/>
    </location>
</feature>
<feature type="transmembrane region" description="Helical" evidence="2">
    <location>
        <begin position="527"/>
        <end position="547"/>
    </location>
</feature>
<feature type="transmembrane region" description="Helical" evidence="2">
    <location>
        <begin position="595"/>
        <end position="615"/>
    </location>
</feature>
<feature type="transmembrane region" description="Helical" evidence="2">
    <location>
        <begin position="627"/>
        <end position="647"/>
    </location>
</feature>
<feature type="transmembrane region" description="Helical" evidence="2">
    <location>
        <begin position="651"/>
        <end position="671"/>
    </location>
</feature>
<feature type="transmembrane region" description="Helical" evidence="2">
    <location>
        <begin position="676"/>
        <end position="696"/>
    </location>
</feature>
<feature type="transmembrane region" description="Helical" evidence="2">
    <location>
        <begin position="712"/>
        <end position="732"/>
    </location>
</feature>
<feature type="transmembrane region" description="Helical" evidence="2">
    <location>
        <begin position="768"/>
        <end position="788"/>
    </location>
</feature>
<protein>
    <recommendedName>
        <fullName>Putative antiporter subunit mnhA2</fullName>
    </recommendedName>
    <alternativeName>
        <fullName>Mrp complex subunit A2</fullName>
    </alternativeName>
    <alternativeName>
        <fullName>Putative NADH-ubiquinone oxidoreductase subunit mnhA2</fullName>
    </alternativeName>
</protein>
<dbReference type="EMBL" id="CP000736">
    <property type="protein sequence ID" value="ABR51517.1"/>
    <property type="molecule type" value="Genomic_DNA"/>
</dbReference>
<dbReference type="SMR" id="A6TZ99"/>
<dbReference type="KEGG" id="sah:SaurJH1_0660"/>
<dbReference type="HOGENOM" id="CLU_007100_2_1_9"/>
<dbReference type="GO" id="GO:0005886">
    <property type="term" value="C:plasma membrane"/>
    <property type="evidence" value="ECO:0007669"/>
    <property type="project" value="UniProtKB-SubCell"/>
</dbReference>
<dbReference type="GO" id="GO:0015297">
    <property type="term" value="F:antiporter activity"/>
    <property type="evidence" value="ECO:0007669"/>
    <property type="project" value="UniProtKB-KW"/>
</dbReference>
<dbReference type="GO" id="GO:0006811">
    <property type="term" value="P:monoatomic ion transport"/>
    <property type="evidence" value="ECO:0007669"/>
    <property type="project" value="UniProtKB-KW"/>
</dbReference>
<dbReference type="InterPro" id="IPR050616">
    <property type="entry name" value="CPA3_Na-H_Antiporter_A"/>
</dbReference>
<dbReference type="InterPro" id="IPR025383">
    <property type="entry name" value="MrpA_C/MbhD"/>
</dbReference>
<dbReference type="InterPro" id="IPR046806">
    <property type="entry name" value="MrpA_C/MbhE"/>
</dbReference>
<dbReference type="InterPro" id="IPR001750">
    <property type="entry name" value="ND/Mrp_TM"/>
</dbReference>
<dbReference type="InterPro" id="IPR001516">
    <property type="entry name" value="Proton_antipo_N"/>
</dbReference>
<dbReference type="NCBIfam" id="NF009286">
    <property type="entry name" value="PRK12646.1"/>
    <property type="match status" value="1"/>
</dbReference>
<dbReference type="PANTHER" id="PTHR43373">
    <property type="entry name" value="NA(+)/H(+) ANTIPORTER SUBUNIT"/>
    <property type="match status" value="1"/>
</dbReference>
<dbReference type="PANTHER" id="PTHR43373:SF1">
    <property type="entry name" value="NA(+)_H(+) ANTIPORTER SUBUNIT A"/>
    <property type="match status" value="1"/>
</dbReference>
<dbReference type="Pfam" id="PF13244">
    <property type="entry name" value="MbhD"/>
    <property type="match status" value="1"/>
</dbReference>
<dbReference type="Pfam" id="PF20501">
    <property type="entry name" value="MbhE"/>
    <property type="match status" value="1"/>
</dbReference>
<dbReference type="Pfam" id="PF00361">
    <property type="entry name" value="Proton_antipo_M"/>
    <property type="match status" value="1"/>
</dbReference>
<dbReference type="Pfam" id="PF00662">
    <property type="entry name" value="Proton_antipo_N"/>
    <property type="match status" value="1"/>
</dbReference>
<dbReference type="PRINTS" id="PR01434">
    <property type="entry name" value="NADHDHGNASE5"/>
</dbReference>
<keyword id="KW-0050">Antiport</keyword>
<keyword id="KW-1003">Cell membrane</keyword>
<keyword id="KW-0406">Ion transport</keyword>
<keyword id="KW-0472">Membrane</keyword>
<keyword id="KW-0812">Transmembrane</keyword>
<keyword id="KW-1133">Transmembrane helix</keyword>
<keyword id="KW-0813">Transport</keyword>
<name>MNHA2_STAA2</name>
<gene>
    <name type="primary">mnhA2</name>
    <name type="synonym">mrpA2</name>
    <name type="ordered locus">SaurJH1_0660</name>
</gene>
<comment type="subunit">
    <text evidence="1">May form a heterooligomeric complex that consists of seven subunits: mnhA2, mnhB2, mnhC2, mnhD2, mnhE2, mnhF2 and mnhG2.</text>
</comment>
<comment type="subcellular location">
    <subcellularLocation>
        <location evidence="3">Cell membrane</location>
        <topology evidence="3">Multi-pass membrane protein</topology>
    </subcellularLocation>
</comment>
<comment type="similarity">
    <text evidence="3">Belongs to the CPA3 antiporters (TC 2.A.63) subunit A family.</text>
</comment>
<proteinExistence type="inferred from homology"/>
<accession>A6TZ99</accession>
<sequence length="800" mass="89610">MSLVYLLIAILVIMAMILLMSKRRALAKYAGYIALVAPVISSIYFLIQIPSVAKLQYLSTSIPWIKTLDINLDLRLDGLSLMFSLIISLIGIAVFFYATQYLSSRKDNLPRFYFYLTLFMFSMIGIVLSDNTILMYIFWELTSVSSFLLISYWYNNGDSQFGAIQSFMITVFGGLALLVGFIMLYIMTGTNNITDILGQADHIKNHGLFIPMIFMFLLGAFTKSAQFPFHIWLPRAMAAPTPVSAYLHSATMVKAGIFLLLRFTPLLGLSNMYIYIVTFVGLITMLFGSITALKQWDLKGILAYSTISQLGMIMAMVGIGGGYAQHQQDAIASIYVFVLFGALFHLMNHAIFKCALFMGVGILDHEAGSRDIRILSGMRQLFPKMNLVMTIAALSMAGVPFLNGFLSKEMFLDALTQTGQLSQFSLISMIAIVFVGVIASIFTFTYALYMVKEVFWTKYDSKVFTKKNIHEPWLFSLPSLILMVLVPVIFFVPNIFGKGIIVPALRGVSGGNHQIDPLAPHVSQWHGFNIPLLLTIIIILLGSVLAIKVDWKKVFTGKIRQISVSKGYEMVYRHFEKFATKRFKRVMQDRLNQYIIMTLGIFMIIIGYGYIRIGLPKVHQLHVSEFGALEIILAIVTVTIGISLIFIRQRLTMVILNGVIGFVVTLFFIAMKAPDLALTQLVVETITTILFIVSFSRLPNVPRSNANKKREIIKISVSLLMALIVVSLIFITQQTDGLSSISDFYLKADKLTGGKNIVNAILGDFRALDTLFEGLVLIITGLGIYTLLNYQDRRGQDERE</sequence>
<reference key="1">
    <citation type="submission" date="2007-06" db="EMBL/GenBank/DDBJ databases">
        <title>Complete sequence of chromosome of Staphylococcus aureus subsp. aureus JH1.</title>
        <authorList>
            <consortium name="US DOE Joint Genome Institute"/>
            <person name="Copeland A."/>
            <person name="Lucas S."/>
            <person name="Lapidus A."/>
            <person name="Barry K."/>
            <person name="Detter J.C."/>
            <person name="Glavina del Rio T."/>
            <person name="Hammon N."/>
            <person name="Israni S."/>
            <person name="Dalin E."/>
            <person name="Tice H."/>
            <person name="Pitluck S."/>
            <person name="Chain P."/>
            <person name="Malfatti S."/>
            <person name="Shin M."/>
            <person name="Vergez L."/>
            <person name="Schmutz J."/>
            <person name="Larimer F."/>
            <person name="Land M."/>
            <person name="Hauser L."/>
            <person name="Kyrpides N."/>
            <person name="Ivanova N."/>
            <person name="Tomasz A."/>
            <person name="Richardson P."/>
        </authorList>
    </citation>
    <scope>NUCLEOTIDE SEQUENCE [LARGE SCALE GENOMIC DNA]</scope>
    <source>
        <strain>JH1</strain>
    </source>
</reference>
<organism>
    <name type="scientific">Staphylococcus aureus (strain JH1)</name>
    <dbReference type="NCBI Taxonomy" id="359787"/>
    <lineage>
        <taxon>Bacteria</taxon>
        <taxon>Bacillati</taxon>
        <taxon>Bacillota</taxon>
        <taxon>Bacilli</taxon>
        <taxon>Bacillales</taxon>
        <taxon>Staphylococcaceae</taxon>
        <taxon>Staphylococcus</taxon>
    </lineage>
</organism>
<evidence type="ECO:0000250" key="1"/>
<evidence type="ECO:0000255" key="2"/>
<evidence type="ECO:0000305" key="3"/>